<proteinExistence type="evidence at protein level"/>
<sequence>MLAAALRRCTAAAAARGLLHPVSAPSPAAAVCSIRCYSHGSHETDEEFDARWVTYFNKPDIDAWELRKGMNTLVGYDLVPEPKIIDAALRACRRLNDFASAVRILEVVKDKAGPHKEIYPYVIQELRPTLNELGISTPEELGLDKV</sequence>
<dbReference type="EMBL" id="X15030">
    <property type="protein sequence ID" value="CAA33134.1"/>
    <property type="molecule type" value="mRNA"/>
</dbReference>
<dbReference type="PIR" id="S04592">
    <property type="entry name" value="S04592"/>
</dbReference>
<dbReference type="RefSeq" id="NP_665726.1">
    <property type="nucleotide sequence ID" value="NM_145783.1"/>
</dbReference>
<dbReference type="SMR" id="P11240"/>
<dbReference type="BioGRID" id="251679">
    <property type="interactions" value="2"/>
</dbReference>
<dbReference type="CORUM" id="P11240"/>
<dbReference type="FunCoup" id="P11240">
    <property type="interactions" value="2332"/>
</dbReference>
<dbReference type="IntAct" id="P11240">
    <property type="interactions" value="2"/>
</dbReference>
<dbReference type="MINT" id="P11240"/>
<dbReference type="STRING" id="10116.ENSRNOP00000025525"/>
<dbReference type="GlyGen" id="P11240">
    <property type="glycosylation" value="1 site, 1 O-linked glycan (1 site)"/>
</dbReference>
<dbReference type="iPTMnet" id="P11240"/>
<dbReference type="PhosphoSitePlus" id="P11240"/>
<dbReference type="jPOST" id="P11240"/>
<dbReference type="PaxDb" id="10116-ENSRNOP00000025525"/>
<dbReference type="GeneID" id="252934"/>
<dbReference type="KEGG" id="rno:252934"/>
<dbReference type="UCSC" id="RGD:620607">
    <property type="organism name" value="rat"/>
</dbReference>
<dbReference type="AGR" id="RGD:620607"/>
<dbReference type="CTD" id="9377"/>
<dbReference type="RGD" id="620607">
    <property type="gene designation" value="Cox5a"/>
</dbReference>
<dbReference type="VEuPathDB" id="HostDB:ENSRNOG00000018816"/>
<dbReference type="eggNOG" id="KOG4077">
    <property type="taxonomic scope" value="Eukaryota"/>
</dbReference>
<dbReference type="HOGENOM" id="CLU_099086_1_1_1"/>
<dbReference type="InParanoid" id="P11240"/>
<dbReference type="OrthoDB" id="5778907at2759"/>
<dbReference type="PhylomeDB" id="P11240"/>
<dbReference type="TreeFam" id="TF105062"/>
<dbReference type="Reactome" id="R-RNO-5628897">
    <property type="pathway name" value="TP53 Regulates Metabolic Genes"/>
</dbReference>
<dbReference type="Reactome" id="R-RNO-611105">
    <property type="pathway name" value="Respiratory electron transport"/>
</dbReference>
<dbReference type="Reactome" id="R-RNO-9707564">
    <property type="pathway name" value="Cytoprotection by HMOX1"/>
</dbReference>
<dbReference type="Reactome" id="R-RNO-9837999">
    <property type="pathway name" value="Mitochondrial protein degradation"/>
</dbReference>
<dbReference type="Reactome" id="R-RNO-9864848">
    <property type="pathway name" value="Complex IV assembly"/>
</dbReference>
<dbReference type="UniPathway" id="UPA00705"/>
<dbReference type="PRO" id="PR:P11240"/>
<dbReference type="Proteomes" id="UP000002494">
    <property type="component" value="Chromosome 8"/>
</dbReference>
<dbReference type="Bgee" id="ENSRNOG00000018816">
    <property type="expression patterns" value="Expressed in heart and 19 other cell types or tissues"/>
</dbReference>
<dbReference type="GO" id="GO:0005743">
    <property type="term" value="C:mitochondrial inner membrane"/>
    <property type="evidence" value="ECO:0000266"/>
    <property type="project" value="RGD"/>
</dbReference>
<dbReference type="GO" id="GO:0031966">
    <property type="term" value="C:mitochondrial membrane"/>
    <property type="evidence" value="ECO:0000266"/>
    <property type="project" value="RGD"/>
</dbReference>
<dbReference type="GO" id="GO:0005739">
    <property type="term" value="C:mitochondrion"/>
    <property type="evidence" value="ECO:0000266"/>
    <property type="project" value="RGD"/>
</dbReference>
<dbReference type="GO" id="GO:0045277">
    <property type="term" value="C:respiratory chain complex IV"/>
    <property type="evidence" value="ECO:0000266"/>
    <property type="project" value="RGD"/>
</dbReference>
<dbReference type="GO" id="GO:0004129">
    <property type="term" value="F:cytochrome-c oxidase activity"/>
    <property type="evidence" value="ECO:0000314"/>
    <property type="project" value="RGD"/>
</dbReference>
<dbReference type="GO" id="GO:0046872">
    <property type="term" value="F:metal ion binding"/>
    <property type="evidence" value="ECO:0007669"/>
    <property type="project" value="UniProtKB-KW"/>
</dbReference>
<dbReference type="GO" id="GO:0006123">
    <property type="term" value="P:mitochondrial electron transport, cytochrome c to oxygen"/>
    <property type="evidence" value="ECO:0000318"/>
    <property type="project" value="GO_Central"/>
</dbReference>
<dbReference type="CDD" id="cd00923">
    <property type="entry name" value="Cyt_c_Oxidase_Va"/>
    <property type="match status" value="1"/>
</dbReference>
<dbReference type="FunFam" id="1.25.40.40:FF:000002">
    <property type="entry name" value="cytochrome c oxidase subunit 5A, mitochondrial"/>
    <property type="match status" value="1"/>
</dbReference>
<dbReference type="Gene3D" id="1.25.40.40">
    <property type="entry name" value="Cytochrome c oxidase, subunit Va/VI"/>
    <property type="match status" value="1"/>
</dbReference>
<dbReference type="InterPro" id="IPR003204">
    <property type="entry name" value="Cyt_c_oxidase_su5A/6"/>
</dbReference>
<dbReference type="InterPro" id="IPR036545">
    <property type="entry name" value="Cyt_c_oxidase_su5A/6_sf"/>
</dbReference>
<dbReference type="PANTHER" id="PTHR14200">
    <property type="entry name" value="CYTOCHROME C OXIDASE POLYPEPTIDE"/>
    <property type="match status" value="1"/>
</dbReference>
<dbReference type="PANTHER" id="PTHR14200:SF16">
    <property type="entry name" value="CYTOCHROME C OXIDASE SUBUNIT 5A, MITOCHONDRIAL"/>
    <property type="match status" value="1"/>
</dbReference>
<dbReference type="Pfam" id="PF02284">
    <property type="entry name" value="COX5A"/>
    <property type="match status" value="1"/>
</dbReference>
<dbReference type="SUPFAM" id="SSF48479">
    <property type="entry name" value="Cytochrome c oxidase subunit E"/>
    <property type="match status" value="1"/>
</dbReference>
<evidence type="ECO:0000250" key="1">
    <source>
        <dbReference type="UniProtKB" id="P00426"/>
    </source>
</evidence>
<evidence type="ECO:0000250" key="2">
    <source>
        <dbReference type="UniProtKB" id="P00427"/>
    </source>
</evidence>
<evidence type="ECO:0000250" key="3">
    <source>
        <dbReference type="UniProtKB" id="P12787"/>
    </source>
</evidence>
<evidence type="ECO:0000250" key="4">
    <source>
        <dbReference type="UniProtKB" id="P20674"/>
    </source>
</evidence>
<evidence type="ECO:0000269" key="5">
    <source>
    </source>
</evidence>
<evidence type="ECO:0000269" key="6">
    <source>
    </source>
</evidence>
<evidence type="ECO:0000305" key="7"/>
<organism>
    <name type="scientific">Rattus norvegicus</name>
    <name type="common">Rat</name>
    <dbReference type="NCBI Taxonomy" id="10116"/>
    <lineage>
        <taxon>Eukaryota</taxon>
        <taxon>Metazoa</taxon>
        <taxon>Chordata</taxon>
        <taxon>Craniata</taxon>
        <taxon>Vertebrata</taxon>
        <taxon>Euteleostomi</taxon>
        <taxon>Mammalia</taxon>
        <taxon>Eutheria</taxon>
        <taxon>Euarchontoglires</taxon>
        <taxon>Glires</taxon>
        <taxon>Rodentia</taxon>
        <taxon>Myomorpha</taxon>
        <taxon>Muroidea</taxon>
        <taxon>Muridae</taxon>
        <taxon>Murinae</taxon>
        <taxon>Rattus</taxon>
    </lineage>
</organism>
<keyword id="KW-0007">Acetylation</keyword>
<keyword id="KW-0903">Direct protein sequencing</keyword>
<keyword id="KW-0349">Heme</keyword>
<keyword id="KW-0408">Iron</keyword>
<keyword id="KW-0472">Membrane</keyword>
<keyword id="KW-0479">Metal-binding</keyword>
<keyword id="KW-0496">Mitochondrion</keyword>
<keyword id="KW-0999">Mitochondrion inner membrane</keyword>
<keyword id="KW-0597">Phosphoprotein</keyword>
<keyword id="KW-1185">Reference proteome</keyword>
<keyword id="KW-0809">Transit peptide</keyword>
<keyword id="KW-0832">Ubl conjugation</keyword>
<name>COX5A_RAT</name>
<protein>
    <recommendedName>
        <fullName>Cytochrome c oxidase subunit 5A, mitochondrial</fullName>
    </recommendedName>
    <alternativeName>
        <fullName>Cytochrome c oxidase polypeptide Va</fullName>
    </alternativeName>
</protein>
<comment type="function">
    <text evidence="2">Component of the cytochrome c oxidase, the last enzyme in the mitochondrial electron transport chain which drives oxidative phosphorylation. The respiratory chain contains 3 multisubunit complexes succinate dehydrogenase (complex II, CII), ubiquinol-cytochrome c oxidoreductase (cytochrome b-c1 complex, complex III, CIII) and cytochrome c oxidase (complex IV, CIV), that cooperate to transfer electrons derived from NADH and succinate to molecular oxygen, creating an electrochemical gradient over the inner membrane that drives transmembrane transport and the ATP synthase. Cytochrome c oxidase is the component of the respiratory chain that catalyzes the reduction of oxygen to water. Electrons originating from reduced cytochrome c in the intermembrane space (IMS) are transferred via the dinuclear copper A center (CU(A)) of subunit 2 and heme A of subunit 1 to the active site in subunit 1, a binuclear center (BNC) formed by heme A3 and copper B (CU(B)). The BNC reduces molecular oxygen to 2 water molecules using 4 electrons from cytochrome c in the IMS and 4 protons from the mitochondrial matrix.</text>
</comment>
<comment type="pathway">
    <text evidence="2">Energy metabolism; oxidative phosphorylation.</text>
</comment>
<comment type="subunit">
    <text evidence="1 4">Component of the cytochrome c oxidase (complex IV, CIV), a multisubunit enzyme composed of 14 subunits. The complex is composed of a catalytic core of 3 subunits MT-CO1, MT-CO2 and MT-CO3, encoded in the mitochondrial DNA, and 11 supernumerary subunits COX4I, COX5A, COX5B, COX6A, COX6B, COX6C, COX7A, COX7B, COX7C, COX8 and NDUFA4, which are encoded in the nuclear genome. The complex exists as a monomer or a dimer and forms supercomplexes (SCs) in the inner mitochondrial membrane with NADH-ubiquinone oxidoreductase (complex I, CI) and ubiquinol-cytochrome c oxidoreductase (cytochrome b-c1 complex, complex III, CIII), resulting in different assemblies (supercomplex SCI(1)III(2)IV(1) and megacomplex MCI(2)III(2)IV(2)) (By similarity). Interacts with AFG1L (By similarity). Interacts with RAB5IF (By similarity).</text>
</comment>
<comment type="subcellular location">
    <subcellularLocation>
        <location evidence="1">Mitochondrion inner membrane</location>
        <topology evidence="1">Peripheral membrane protein</topology>
        <orientation evidence="1">Matrix side</orientation>
    </subcellularLocation>
</comment>
<comment type="tissue specificity">
    <text evidence="5">Expressed in the head of epididymal sperm but not in testicular sperm (at protein level).</text>
</comment>
<comment type="PTM">
    <text evidence="4">In response to mitochondrial stress, the precursor protein is ubiquitinated by the SIFI complex in the cytoplasm before mitochondrial import, leading to its degradation. Within the SIFI complex, UBR4 initiates ubiquitin chain that are further elongated or branched by KCMF1.</text>
</comment>
<comment type="mass spectrometry"/>
<comment type="similarity">
    <text evidence="7">Belongs to the cytochrome c oxidase subunit 5A family.</text>
</comment>
<feature type="transit peptide" description="Mitochondrion" evidence="6">
    <location>
        <begin position="1"/>
        <end position="37"/>
    </location>
</feature>
<feature type="chain" id="PRO_0000006102" description="Cytochrome c oxidase subunit 5A, mitochondrial">
    <location>
        <begin position="38"/>
        <end position="146"/>
    </location>
</feature>
<feature type="short sequence motif" description="SIFI-degron" evidence="4">
    <location>
        <begin position="2"/>
        <end position="16"/>
    </location>
</feature>
<feature type="modified residue" description="N6-acetyllysine" evidence="3">
    <location>
        <position position="83"/>
    </location>
</feature>
<feature type="modified residue" description="N6-acetyllysine" evidence="3">
    <location>
        <position position="109"/>
    </location>
</feature>
<feature type="modified residue" description="Phosphothreonine" evidence="4">
    <location>
        <position position="137"/>
    </location>
</feature>
<gene>
    <name type="primary">Cox5a</name>
</gene>
<accession>P11240</accession>
<reference key="1">
    <citation type="journal article" date="1989" name="Nucleic Acids Res.">
        <title>Nucleotide sequence of cDNA encoding subunit Va from rat heart cytochrome c oxidase.</title>
        <authorList>
            <person name="Droste M."/>
            <person name="Schon E."/>
            <person name="Kadenbach B."/>
        </authorList>
    </citation>
    <scope>NUCLEOTIDE SEQUENCE [MRNA]</scope>
    <source>
        <strain>Sprague-Dawley</strain>
        <tissue>Heart</tissue>
    </source>
</reference>
<reference key="2">
    <citation type="journal article" date="1995" name="Eur. J. Biochem.">
        <title>Cytochrome-c oxidase in developing rat heart. Enzymic properties and amino-terminal sequences suggest identity of the fetal heart and the adult liver isoform.</title>
        <authorList>
            <person name="Schaegger H."/>
            <person name="Noack H."/>
            <person name="Halangk W."/>
            <person name="Brandt U."/>
            <person name="von Jagow G."/>
        </authorList>
    </citation>
    <scope>PROTEIN SEQUENCE OF 38-47</scope>
    <source>
        <strain>Wistar</strain>
        <tissue>Liver</tissue>
    </source>
</reference>
<reference key="3">
    <citation type="submission" date="2006-11" db="UniProtKB">
        <authorList>
            <person name="Lubec G."/>
            <person name="Afjehi-Sadat L."/>
        </authorList>
    </citation>
    <scope>PROTEIN SEQUENCE OF 94-103</scope>
    <scope>IDENTIFICATION BY MASS SPECTROMETRY</scope>
    <source>
        <strain>Sprague-Dawley</strain>
        <tissue>Spinal cord</tissue>
    </source>
</reference>
<reference key="4">
    <citation type="journal article" date="2011" name="J. Androl.">
        <title>Differential proteomics leads to identification of domain specific epididymal sperm proteins.</title>
        <authorList>
            <person name="Suryawanshi A.R."/>
            <person name="Khan S.A."/>
            <person name="Gajbhiye R.K."/>
            <person name="Gurav M.Y."/>
            <person name="Khole V.V."/>
        </authorList>
    </citation>
    <scope>IDENTIFICATION BY MASS SPECTROMETRY</scope>
    <scope>TISSUE SPECIFICITY</scope>
    <scope>MASS SPECTROMETRY</scope>
    <source>
        <strain>Holtzman</strain>
        <tissue>Sperm</tissue>
    </source>
</reference>